<keyword id="KW-0963">Cytoplasm</keyword>
<keyword id="KW-0342">GTP-binding</keyword>
<keyword id="KW-0396">Initiation factor</keyword>
<keyword id="KW-0547">Nucleotide-binding</keyword>
<keyword id="KW-0648">Protein biosynthesis</keyword>
<keyword id="KW-1185">Reference proteome</keyword>
<gene>
    <name evidence="2" type="primary">infB</name>
    <name type="ordered locus">PMI3418</name>
</gene>
<accession>B4F2B9</accession>
<organism>
    <name type="scientific">Proteus mirabilis (strain HI4320)</name>
    <dbReference type="NCBI Taxonomy" id="529507"/>
    <lineage>
        <taxon>Bacteria</taxon>
        <taxon>Pseudomonadati</taxon>
        <taxon>Pseudomonadota</taxon>
        <taxon>Gammaproteobacteria</taxon>
        <taxon>Enterobacterales</taxon>
        <taxon>Morganellaceae</taxon>
        <taxon>Proteus</taxon>
    </lineage>
</organism>
<proteinExistence type="inferred from homology"/>
<dbReference type="EMBL" id="AM942759">
    <property type="protein sequence ID" value="CAR46704.1"/>
    <property type="molecule type" value="Genomic_DNA"/>
</dbReference>
<dbReference type="RefSeq" id="WP_004246237.1">
    <property type="nucleotide sequence ID" value="NC_010554.1"/>
</dbReference>
<dbReference type="SMR" id="B4F2B9"/>
<dbReference type="EnsemblBacteria" id="CAR46704">
    <property type="protein sequence ID" value="CAR46704"/>
    <property type="gene ID" value="PMI3418"/>
</dbReference>
<dbReference type="GeneID" id="6802058"/>
<dbReference type="KEGG" id="pmr:PMI3418"/>
<dbReference type="eggNOG" id="COG0532">
    <property type="taxonomic scope" value="Bacteria"/>
</dbReference>
<dbReference type="eggNOG" id="COG3064">
    <property type="taxonomic scope" value="Bacteria"/>
</dbReference>
<dbReference type="HOGENOM" id="CLU_006301_6_3_6"/>
<dbReference type="Proteomes" id="UP000008319">
    <property type="component" value="Chromosome"/>
</dbReference>
<dbReference type="GO" id="GO:0005829">
    <property type="term" value="C:cytosol"/>
    <property type="evidence" value="ECO:0007669"/>
    <property type="project" value="TreeGrafter"/>
</dbReference>
<dbReference type="GO" id="GO:0005525">
    <property type="term" value="F:GTP binding"/>
    <property type="evidence" value="ECO:0007669"/>
    <property type="project" value="UniProtKB-KW"/>
</dbReference>
<dbReference type="GO" id="GO:0003924">
    <property type="term" value="F:GTPase activity"/>
    <property type="evidence" value="ECO:0007669"/>
    <property type="project" value="UniProtKB-UniRule"/>
</dbReference>
<dbReference type="GO" id="GO:0097216">
    <property type="term" value="F:guanosine tetraphosphate binding"/>
    <property type="evidence" value="ECO:0007669"/>
    <property type="project" value="UniProtKB-ARBA"/>
</dbReference>
<dbReference type="GO" id="GO:0003743">
    <property type="term" value="F:translation initiation factor activity"/>
    <property type="evidence" value="ECO:0007669"/>
    <property type="project" value="UniProtKB-UniRule"/>
</dbReference>
<dbReference type="CDD" id="cd01887">
    <property type="entry name" value="IF2_eIF5B"/>
    <property type="match status" value="1"/>
</dbReference>
<dbReference type="CDD" id="cd03702">
    <property type="entry name" value="IF2_mtIF2_II"/>
    <property type="match status" value="1"/>
</dbReference>
<dbReference type="CDD" id="cd03692">
    <property type="entry name" value="mtIF2_IVc"/>
    <property type="match status" value="1"/>
</dbReference>
<dbReference type="FunFam" id="2.40.30.10:FF:000007">
    <property type="entry name" value="Translation initiation factor IF-2"/>
    <property type="match status" value="1"/>
</dbReference>
<dbReference type="FunFam" id="2.40.30.10:FF:000008">
    <property type="entry name" value="Translation initiation factor IF-2"/>
    <property type="match status" value="1"/>
</dbReference>
<dbReference type="FunFam" id="3.30.56.50:FF:000001">
    <property type="entry name" value="Translation initiation factor IF-2"/>
    <property type="match status" value="1"/>
</dbReference>
<dbReference type="FunFam" id="3.40.50.10050:FF:000001">
    <property type="entry name" value="Translation initiation factor IF-2"/>
    <property type="match status" value="1"/>
</dbReference>
<dbReference type="FunFam" id="3.40.50.300:FF:000019">
    <property type="entry name" value="Translation initiation factor IF-2"/>
    <property type="match status" value="1"/>
</dbReference>
<dbReference type="Gene3D" id="3.40.50.300">
    <property type="entry name" value="P-loop containing nucleotide triphosphate hydrolases"/>
    <property type="match status" value="1"/>
</dbReference>
<dbReference type="Gene3D" id="3.30.56.50">
    <property type="entry name" value="Putative DNA-binding domain, N-terminal subdomain of bacterial translation initiation factor IF2"/>
    <property type="match status" value="1"/>
</dbReference>
<dbReference type="Gene3D" id="2.40.30.10">
    <property type="entry name" value="Translation factors"/>
    <property type="match status" value="2"/>
</dbReference>
<dbReference type="Gene3D" id="3.40.50.10050">
    <property type="entry name" value="Translation initiation factor IF- 2, domain 3"/>
    <property type="match status" value="1"/>
</dbReference>
<dbReference type="HAMAP" id="MF_00100_B">
    <property type="entry name" value="IF_2_B"/>
    <property type="match status" value="1"/>
</dbReference>
<dbReference type="InterPro" id="IPR009061">
    <property type="entry name" value="DNA-bd_dom_put_sf"/>
</dbReference>
<dbReference type="InterPro" id="IPR053905">
    <property type="entry name" value="EF-G-like_DII"/>
</dbReference>
<dbReference type="InterPro" id="IPR004161">
    <property type="entry name" value="EFTu-like_2"/>
</dbReference>
<dbReference type="InterPro" id="IPR013575">
    <property type="entry name" value="IF2_assoc_dom_bac"/>
</dbReference>
<dbReference type="InterPro" id="IPR044145">
    <property type="entry name" value="IF2_II"/>
</dbReference>
<dbReference type="InterPro" id="IPR006847">
    <property type="entry name" value="IF2_N"/>
</dbReference>
<dbReference type="InterPro" id="IPR027417">
    <property type="entry name" value="P-loop_NTPase"/>
</dbReference>
<dbReference type="InterPro" id="IPR005225">
    <property type="entry name" value="Small_GTP-bd"/>
</dbReference>
<dbReference type="InterPro" id="IPR000795">
    <property type="entry name" value="T_Tr_GTP-bd_dom"/>
</dbReference>
<dbReference type="InterPro" id="IPR000178">
    <property type="entry name" value="TF_IF2_bacterial-like"/>
</dbReference>
<dbReference type="InterPro" id="IPR015760">
    <property type="entry name" value="TIF_IF2"/>
</dbReference>
<dbReference type="InterPro" id="IPR023115">
    <property type="entry name" value="TIF_IF2_dom3"/>
</dbReference>
<dbReference type="InterPro" id="IPR036925">
    <property type="entry name" value="TIF_IF2_dom3_sf"/>
</dbReference>
<dbReference type="InterPro" id="IPR009000">
    <property type="entry name" value="Transl_B-barrel_sf"/>
</dbReference>
<dbReference type="NCBIfam" id="TIGR00487">
    <property type="entry name" value="IF-2"/>
    <property type="match status" value="1"/>
</dbReference>
<dbReference type="NCBIfam" id="TIGR00231">
    <property type="entry name" value="small_GTP"/>
    <property type="match status" value="1"/>
</dbReference>
<dbReference type="PANTHER" id="PTHR43381:SF5">
    <property type="entry name" value="TR-TYPE G DOMAIN-CONTAINING PROTEIN"/>
    <property type="match status" value="1"/>
</dbReference>
<dbReference type="PANTHER" id="PTHR43381">
    <property type="entry name" value="TRANSLATION INITIATION FACTOR IF-2-RELATED"/>
    <property type="match status" value="1"/>
</dbReference>
<dbReference type="Pfam" id="PF22042">
    <property type="entry name" value="EF-G_D2"/>
    <property type="match status" value="1"/>
</dbReference>
<dbReference type="Pfam" id="PF00009">
    <property type="entry name" value="GTP_EFTU"/>
    <property type="match status" value="1"/>
</dbReference>
<dbReference type="Pfam" id="PF03144">
    <property type="entry name" value="GTP_EFTU_D2"/>
    <property type="match status" value="1"/>
</dbReference>
<dbReference type="Pfam" id="PF11987">
    <property type="entry name" value="IF-2"/>
    <property type="match status" value="1"/>
</dbReference>
<dbReference type="Pfam" id="PF08364">
    <property type="entry name" value="IF2_assoc"/>
    <property type="match status" value="1"/>
</dbReference>
<dbReference type="Pfam" id="PF04760">
    <property type="entry name" value="IF2_N"/>
    <property type="match status" value="2"/>
</dbReference>
<dbReference type="SUPFAM" id="SSF52156">
    <property type="entry name" value="Initiation factor IF2/eIF5b, domain 3"/>
    <property type="match status" value="1"/>
</dbReference>
<dbReference type="SUPFAM" id="SSF52540">
    <property type="entry name" value="P-loop containing nucleoside triphosphate hydrolases"/>
    <property type="match status" value="1"/>
</dbReference>
<dbReference type="SUPFAM" id="SSF46955">
    <property type="entry name" value="Putative DNA-binding domain"/>
    <property type="match status" value="1"/>
</dbReference>
<dbReference type="SUPFAM" id="SSF50447">
    <property type="entry name" value="Translation proteins"/>
    <property type="match status" value="2"/>
</dbReference>
<dbReference type="PROSITE" id="PS51722">
    <property type="entry name" value="G_TR_2"/>
    <property type="match status" value="1"/>
</dbReference>
<dbReference type="PROSITE" id="PS01176">
    <property type="entry name" value="IF2"/>
    <property type="match status" value="1"/>
</dbReference>
<sequence>MTDETVKSLAEEIQTPVERLVQQFADAGIKKTVSDSVSQKEKETLLAWLNRDKESTSQPEKLTLQRKVRSTLSVPGTGGKNKSVAIEVRKKRTYVNRDAVEKAQAAEQAQREAEEKARREAEEKAQREAQEKAQREAEEKAKREAEEAKKKAEEKAKREAEEAKREAAELAKREAAEKDKVKQNEKPKADKADQEKARRIAEQAELKRKTEEAQRRKAEEEARIAAEKARRLAEENAEKWTSDTSSETEGTDYHVTTSRYARDAEDESDAEVEGGRGRGRAAKAPRPKKNNRHSEKADREEARAAGRSNKKGKGRKNSTLQQGFNKPAAAVNRDVVIGETISVADLANKMAVKGSEVIKTMMKMGAMATINQVLDQETAQLVAEEMGHKVILRRENELEEQVMNDRDTSDEMAVSRAPVVTIMGHVDHGKTSLLDYIRSTKVASGEAGGITQHIGAYHVKTDKGEITFLDTPGHAAFTSMRARGAQVTDIVVLVVAADDGVMPQTIEAIQHAKAANVPVVVAVNKIDKPEADPDRVKTELSQYGILPEDWGGETQFIHVSAKQGLGIDELLDAILLQAEVLELKAVKEGMASGVVIESYLDKGRGPVATILVREGTLNKGDIVLCGFEYGRIRAMRNELGKEVQSAGPSMPVEILGLSNVPSAGDEATVVRDEKKAREVALYRQGKFREVKLARQQKSKLENMFANMEEGKVSELNIVLKTDVQGTCEAITDALVKLSTDEVKLKIIGSGVGGITETDATLAAASDAIILGFNVRADASARRIIEQESVDLRYYSVIYSLIDEIKSAMSGMLEPEYKQEIMGLAEVRDVFKSPKFGAIAGCMVVEGNIKRNNPIRVLRDNVVIYEGELESLRRFKDDVNEVRNGMECGIGVKNYNDVRVGDMIEVFQVIEIKRSID</sequence>
<name>IF2_PROMH</name>
<comment type="function">
    <text evidence="2">One of the essential components for the initiation of protein synthesis. Protects formylmethionyl-tRNA from spontaneous hydrolysis and promotes its binding to the 30S ribosomal subunits. Also involved in the hydrolysis of GTP during the formation of the 70S ribosomal complex.</text>
</comment>
<comment type="subcellular location">
    <subcellularLocation>
        <location evidence="2">Cytoplasm</location>
    </subcellularLocation>
</comment>
<comment type="similarity">
    <text evidence="2">Belongs to the TRAFAC class translation factor GTPase superfamily. Classic translation factor GTPase family. IF-2 subfamily.</text>
</comment>
<evidence type="ECO:0000250" key="1"/>
<evidence type="ECO:0000255" key="2">
    <source>
        <dbReference type="HAMAP-Rule" id="MF_00100"/>
    </source>
</evidence>
<evidence type="ECO:0000256" key="3">
    <source>
        <dbReference type="SAM" id="MobiDB-lite"/>
    </source>
</evidence>
<reference key="1">
    <citation type="journal article" date="2008" name="J. Bacteriol.">
        <title>Complete genome sequence of uropathogenic Proteus mirabilis, a master of both adherence and motility.</title>
        <authorList>
            <person name="Pearson M.M."/>
            <person name="Sebaihia M."/>
            <person name="Churcher C."/>
            <person name="Quail M.A."/>
            <person name="Seshasayee A.S."/>
            <person name="Luscombe N.M."/>
            <person name="Abdellah Z."/>
            <person name="Arrosmith C."/>
            <person name="Atkin B."/>
            <person name="Chillingworth T."/>
            <person name="Hauser H."/>
            <person name="Jagels K."/>
            <person name="Moule S."/>
            <person name="Mungall K."/>
            <person name="Norbertczak H."/>
            <person name="Rabbinowitsch E."/>
            <person name="Walker D."/>
            <person name="Whithead S."/>
            <person name="Thomson N.R."/>
            <person name="Rather P.N."/>
            <person name="Parkhill J."/>
            <person name="Mobley H.L.T."/>
        </authorList>
    </citation>
    <scope>NUCLEOTIDE SEQUENCE [LARGE SCALE GENOMIC DNA]</scope>
    <source>
        <strain>HI4320</strain>
    </source>
</reference>
<feature type="chain" id="PRO_1000093814" description="Translation initiation factor IF-2">
    <location>
        <begin position="1"/>
        <end position="916"/>
    </location>
</feature>
<feature type="domain" description="tr-type G">
    <location>
        <begin position="415"/>
        <end position="584"/>
    </location>
</feature>
<feature type="region of interest" description="Disordered" evidence="3">
    <location>
        <begin position="50"/>
        <end position="326"/>
    </location>
</feature>
<feature type="region of interest" description="G1" evidence="1">
    <location>
        <begin position="424"/>
        <end position="431"/>
    </location>
</feature>
<feature type="region of interest" description="G2" evidence="1">
    <location>
        <begin position="449"/>
        <end position="453"/>
    </location>
</feature>
<feature type="region of interest" description="G3" evidence="1">
    <location>
        <begin position="470"/>
        <end position="473"/>
    </location>
</feature>
<feature type="region of interest" description="G4" evidence="1">
    <location>
        <begin position="524"/>
        <end position="527"/>
    </location>
</feature>
<feature type="region of interest" description="G5" evidence="1">
    <location>
        <begin position="560"/>
        <end position="562"/>
    </location>
</feature>
<feature type="compositionally biased region" description="Basic and acidic residues" evidence="3">
    <location>
        <begin position="109"/>
        <end position="241"/>
    </location>
</feature>
<feature type="compositionally biased region" description="Basic residues" evidence="3">
    <location>
        <begin position="277"/>
        <end position="291"/>
    </location>
</feature>
<feature type="compositionally biased region" description="Basic and acidic residues" evidence="3">
    <location>
        <begin position="292"/>
        <end position="304"/>
    </location>
</feature>
<feature type="binding site" evidence="2">
    <location>
        <begin position="424"/>
        <end position="431"/>
    </location>
    <ligand>
        <name>GTP</name>
        <dbReference type="ChEBI" id="CHEBI:37565"/>
    </ligand>
</feature>
<feature type="binding site" evidence="2">
    <location>
        <begin position="470"/>
        <end position="474"/>
    </location>
    <ligand>
        <name>GTP</name>
        <dbReference type="ChEBI" id="CHEBI:37565"/>
    </ligand>
</feature>
<feature type="binding site" evidence="2">
    <location>
        <begin position="524"/>
        <end position="527"/>
    </location>
    <ligand>
        <name>GTP</name>
        <dbReference type="ChEBI" id="CHEBI:37565"/>
    </ligand>
</feature>
<protein>
    <recommendedName>
        <fullName evidence="2">Translation initiation factor IF-2</fullName>
    </recommendedName>
</protein>